<feature type="chain" id="PRO_0000257754" description="Cobalt-precorrin-5B C(1)-methyltransferase">
    <location>
        <begin position="1"/>
        <end position="362"/>
    </location>
</feature>
<dbReference type="EC" id="2.1.1.195" evidence="1"/>
<dbReference type="EMBL" id="CP000086">
    <property type="protein sequence ID" value="ABC38656.1"/>
    <property type="status" value="ALT_INIT"/>
    <property type="molecule type" value="Genomic_DNA"/>
</dbReference>
<dbReference type="SMR" id="Q2SVY2"/>
<dbReference type="KEGG" id="bte:BTH_I2396"/>
<dbReference type="HOGENOM" id="CLU_041273_0_0_4"/>
<dbReference type="UniPathway" id="UPA00148">
    <property type="reaction ID" value="UER00227"/>
</dbReference>
<dbReference type="Proteomes" id="UP000001930">
    <property type="component" value="Chromosome I"/>
</dbReference>
<dbReference type="GO" id="GO:0043780">
    <property type="term" value="F:cobalt-precorrin-5B C1-methyltransferase activity"/>
    <property type="evidence" value="ECO:0007669"/>
    <property type="project" value="RHEA"/>
</dbReference>
<dbReference type="GO" id="GO:0019251">
    <property type="term" value="P:anaerobic cobalamin biosynthetic process"/>
    <property type="evidence" value="ECO:0007669"/>
    <property type="project" value="UniProtKB-UniRule"/>
</dbReference>
<dbReference type="GO" id="GO:0032259">
    <property type="term" value="P:methylation"/>
    <property type="evidence" value="ECO:0007669"/>
    <property type="project" value="UniProtKB-KW"/>
</dbReference>
<dbReference type="Gene3D" id="3.30.2110.10">
    <property type="entry name" value="CbiD-like"/>
    <property type="match status" value="1"/>
</dbReference>
<dbReference type="HAMAP" id="MF_00787">
    <property type="entry name" value="CbiD"/>
    <property type="match status" value="1"/>
</dbReference>
<dbReference type="InterPro" id="IPR002748">
    <property type="entry name" value="CbiD"/>
</dbReference>
<dbReference type="InterPro" id="IPR036074">
    <property type="entry name" value="CbiD_sf"/>
</dbReference>
<dbReference type="NCBIfam" id="TIGR00312">
    <property type="entry name" value="cbiD"/>
    <property type="match status" value="1"/>
</dbReference>
<dbReference type="NCBIfam" id="NF000849">
    <property type="entry name" value="PRK00075.1-1"/>
    <property type="match status" value="1"/>
</dbReference>
<dbReference type="PANTHER" id="PTHR35863">
    <property type="entry name" value="COBALT-PRECORRIN-5B C(1)-METHYLTRANSFERASE"/>
    <property type="match status" value="1"/>
</dbReference>
<dbReference type="PANTHER" id="PTHR35863:SF1">
    <property type="entry name" value="COBALT-PRECORRIN-5B C(1)-METHYLTRANSFERASE"/>
    <property type="match status" value="1"/>
</dbReference>
<dbReference type="Pfam" id="PF01888">
    <property type="entry name" value="CbiD"/>
    <property type="match status" value="1"/>
</dbReference>
<dbReference type="PIRSF" id="PIRSF026782">
    <property type="entry name" value="CbiD"/>
    <property type="match status" value="1"/>
</dbReference>
<dbReference type="SUPFAM" id="SSF111342">
    <property type="entry name" value="CbiD-like"/>
    <property type="match status" value="1"/>
</dbReference>
<evidence type="ECO:0000255" key="1">
    <source>
        <dbReference type="HAMAP-Rule" id="MF_00787"/>
    </source>
</evidence>
<evidence type="ECO:0000305" key="2"/>
<keyword id="KW-0169">Cobalamin biosynthesis</keyword>
<keyword id="KW-0489">Methyltransferase</keyword>
<keyword id="KW-0949">S-adenosyl-L-methionine</keyword>
<keyword id="KW-0808">Transferase</keyword>
<sequence>MRDETPEQPAPLRFGYTTGSCATATSLAAARLLLTGHASDMVDIVLPKGQHVAMRLAFCRATDGGAEAGTIKDAGDDPDVTHGALVFARVRLVHEPGVRFRAGPGVGTVTRAGLTIGVGEPAINPVPRRMMTEHLAALAAEHGYAGGFEVAIGVENGEALARKTMNPRLGIVGGLSILGTTGIVRPFSCSAYIASIHQGIDVARANGVTHIAACTGNASEDAVRARYGLPDIALIEMGDFAGAVLKYLRRASVERLTLCGGFGKLSKLAAGHLDLHSRHSSIDLPRLAQWAGEAGASAVLQHEIRAANTSQQALSLALAHHVPLGDVVCAHARRVARDIVPDEVDVETLAIDREGRIVGVAR</sequence>
<reference key="1">
    <citation type="journal article" date="2005" name="BMC Genomics">
        <title>Bacterial genome adaptation to niches: divergence of the potential virulence genes in three Burkholderia species of different survival strategies.</title>
        <authorList>
            <person name="Kim H.S."/>
            <person name="Schell M.A."/>
            <person name="Yu Y."/>
            <person name="Ulrich R.L."/>
            <person name="Sarria S.H."/>
            <person name="Nierman W.C."/>
            <person name="DeShazer D."/>
        </authorList>
    </citation>
    <scope>NUCLEOTIDE SEQUENCE [LARGE SCALE GENOMIC DNA]</scope>
    <source>
        <strain>ATCC 700388 / DSM 13276 / CCUG 48851 / CIP 106301 / E264</strain>
    </source>
</reference>
<organism>
    <name type="scientific">Burkholderia thailandensis (strain ATCC 700388 / DSM 13276 / CCUG 48851 / CIP 106301 / E264)</name>
    <dbReference type="NCBI Taxonomy" id="271848"/>
    <lineage>
        <taxon>Bacteria</taxon>
        <taxon>Pseudomonadati</taxon>
        <taxon>Pseudomonadota</taxon>
        <taxon>Betaproteobacteria</taxon>
        <taxon>Burkholderiales</taxon>
        <taxon>Burkholderiaceae</taxon>
        <taxon>Burkholderia</taxon>
        <taxon>pseudomallei group</taxon>
    </lineage>
</organism>
<proteinExistence type="inferred from homology"/>
<accession>Q2SVY2</accession>
<comment type="function">
    <text evidence="1">Catalyzes the methylation of C-1 in cobalt-precorrin-5B to form cobalt-precorrin-6A.</text>
</comment>
<comment type="catalytic activity">
    <reaction evidence="1">
        <text>Co-precorrin-5B + S-adenosyl-L-methionine = Co-precorrin-6A + S-adenosyl-L-homocysteine</text>
        <dbReference type="Rhea" id="RHEA:26285"/>
        <dbReference type="ChEBI" id="CHEBI:57856"/>
        <dbReference type="ChEBI" id="CHEBI:59789"/>
        <dbReference type="ChEBI" id="CHEBI:60063"/>
        <dbReference type="ChEBI" id="CHEBI:60064"/>
        <dbReference type="EC" id="2.1.1.195"/>
    </reaction>
</comment>
<comment type="pathway">
    <text evidence="1">Cofactor biosynthesis; adenosylcobalamin biosynthesis; cob(II)yrinate a,c-diamide from sirohydrochlorin (anaerobic route): step 6/10.</text>
</comment>
<comment type="similarity">
    <text evidence="1">Belongs to the CbiD family.</text>
</comment>
<comment type="sequence caution" evidence="2">
    <conflict type="erroneous initiation">
        <sequence resource="EMBL-CDS" id="ABC38656"/>
    </conflict>
</comment>
<protein>
    <recommendedName>
        <fullName evidence="1">Cobalt-precorrin-5B C(1)-methyltransferase</fullName>
        <ecNumber evidence="1">2.1.1.195</ecNumber>
    </recommendedName>
    <alternativeName>
        <fullName evidence="1">Cobalt-precorrin-6A synthase</fullName>
    </alternativeName>
</protein>
<name>CBID_BURTA</name>
<gene>
    <name evidence="1" type="primary">cbiD</name>
    <name type="ordered locus">BTH_I2396</name>
</gene>